<evidence type="ECO:0000250" key="1"/>
<evidence type="ECO:0000255" key="2"/>
<evidence type="ECO:0000255" key="3">
    <source>
        <dbReference type="PROSITE-ProRule" id="PRU00823"/>
    </source>
</evidence>
<evidence type="ECO:0000256" key="4">
    <source>
        <dbReference type="SAM" id="MobiDB-lite"/>
    </source>
</evidence>
<evidence type="ECO:0000305" key="5"/>
<dbReference type="EMBL" id="AP004651">
    <property type="protein sequence ID" value="BAD45736.1"/>
    <property type="molecule type" value="Genomic_DNA"/>
</dbReference>
<dbReference type="EMBL" id="AP005107">
    <property type="protein sequence ID" value="BAD45977.1"/>
    <property type="molecule type" value="Genomic_DNA"/>
</dbReference>
<dbReference type="EMBL" id="AP008212">
    <property type="protein sequence ID" value="BAF19207.2"/>
    <property type="status" value="ALT_SEQ"/>
    <property type="molecule type" value="Genomic_DNA"/>
</dbReference>
<dbReference type="EMBL" id="AP014962">
    <property type="protein sequence ID" value="BAS97057.1"/>
    <property type="molecule type" value="Genomic_DNA"/>
</dbReference>
<dbReference type="EMBL" id="AK242807">
    <property type="protein sequence ID" value="BAH01347.1"/>
    <property type="molecule type" value="mRNA"/>
</dbReference>
<dbReference type="RefSeq" id="XP_015644419.1">
    <property type="nucleotide sequence ID" value="XM_015788933.1"/>
</dbReference>
<dbReference type="SMR" id="Q653P0"/>
<dbReference type="FunCoup" id="Q653P0">
    <property type="interactions" value="1189"/>
</dbReference>
<dbReference type="STRING" id="39947.Q653P0"/>
<dbReference type="PaxDb" id="39947-Q653P0"/>
<dbReference type="EnsemblPlants" id="Os06t0250600-01">
    <property type="protein sequence ID" value="Os06t0250600-01"/>
    <property type="gene ID" value="Os06g0250600"/>
</dbReference>
<dbReference type="Gramene" id="Os06t0250600-01">
    <property type="protein sequence ID" value="Os06t0250600-01"/>
    <property type="gene ID" value="Os06g0250600"/>
</dbReference>
<dbReference type="KEGG" id="dosa:Os06g0250600"/>
<dbReference type="eggNOG" id="KOG0498">
    <property type="taxonomic scope" value="Eukaryota"/>
</dbReference>
<dbReference type="HOGENOM" id="CLU_005746_8_3_1"/>
<dbReference type="InParanoid" id="Q653P0"/>
<dbReference type="OMA" id="VWIPHTI"/>
<dbReference type="OrthoDB" id="426293at2759"/>
<dbReference type="Proteomes" id="UP000000763">
    <property type="component" value="Chromosome 6"/>
</dbReference>
<dbReference type="Proteomes" id="UP000059680">
    <property type="component" value="Chromosome 6"/>
</dbReference>
<dbReference type="GO" id="GO:0034702">
    <property type="term" value="C:monoatomic ion channel complex"/>
    <property type="evidence" value="ECO:0007669"/>
    <property type="project" value="UniProtKB-KW"/>
</dbReference>
<dbReference type="GO" id="GO:0005249">
    <property type="term" value="F:voltage-gated potassium channel activity"/>
    <property type="evidence" value="ECO:0007669"/>
    <property type="project" value="InterPro"/>
</dbReference>
<dbReference type="CDD" id="cd00038">
    <property type="entry name" value="CAP_ED"/>
    <property type="match status" value="1"/>
</dbReference>
<dbReference type="FunFam" id="2.60.120.10:FF:000074">
    <property type="entry name" value="Potassium channel KAT2"/>
    <property type="match status" value="1"/>
</dbReference>
<dbReference type="FunFam" id="1.10.287.70:FF:000139">
    <property type="entry name" value="Potassium channel SKOR"/>
    <property type="match status" value="1"/>
</dbReference>
<dbReference type="Gene3D" id="1.10.287.70">
    <property type="match status" value="1"/>
</dbReference>
<dbReference type="Gene3D" id="1.25.40.20">
    <property type="entry name" value="Ankyrin repeat-containing domain"/>
    <property type="match status" value="2"/>
</dbReference>
<dbReference type="Gene3D" id="1.10.287.630">
    <property type="entry name" value="Helix hairpin bin"/>
    <property type="match status" value="1"/>
</dbReference>
<dbReference type="Gene3D" id="2.60.120.10">
    <property type="entry name" value="Jelly Rolls"/>
    <property type="match status" value="1"/>
</dbReference>
<dbReference type="InterPro" id="IPR002110">
    <property type="entry name" value="Ankyrin_rpt"/>
</dbReference>
<dbReference type="InterPro" id="IPR036770">
    <property type="entry name" value="Ankyrin_rpt-contain_sf"/>
</dbReference>
<dbReference type="InterPro" id="IPR000595">
    <property type="entry name" value="cNMP-bd_dom"/>
</dbReference>
<dbReference type="InterPro" id="IPR018490">
    <property type="entry name" value="cNMP-bd_dom_sf"/>
</dbReference>
<dbReference type="InterPro" id="IPR005821">
    <property type="entry name" value="Ion_trans_dom"/>
</dbReference>
<dbReference type="InterPro" id="IPR003938">
    <property type="entry name" value="K_chnl_volt-dep_EAG/ELK/ERG"/>
</dbReference>
<dbReference type="InterPro" id="IPR045319">
    <property type="entry name" value="KAT/AKT"/>
</dbReference>
<dbReference type="InterPro" id="IPR021789">
    <property type="entry name" value="KHA_dom"/>
</dbReference>
<dbReference type="InterPro" id="IPR014710">
    <property type="entry name" value="RmlC-like_jellyroll"/>
</dbReference>
<dbReference type="PANTHER" id="PTHR45743">
    <property type="entry name" value="POTASSIUM CHANNEL AKT1"/>
    <property type="match status" value="1"/>
</dbReference>
<dbReference type="PANTHER" id="PTHR45743:SF3">
    <property type="entry name" value="POTASSIUM CHANNEL SKOR"/>
    <property type="match status" value="1"/>
</dbReference>
<dbReference type="Pfam" id="PF12796">
    <property type="entry name" value="Ank_2"/>
    <property type="match status" value="2"/>
</dbReference>
<dbReference type="Pfam" id="PF00027">
    <property type="entry name" value="cNMP_binding"/>
    <property type="match status" value="1"/>
</dbReference>
<dbReference type="Pfam" id="PF00520">
    <property type="entry name" value="Ion_trans"/>
    <property type="match status" value="1"/>
</dbReference>
<dbReference type="Pfam" id="PF11834">
    <property type="entry name" value="KHA"/>
    <property type="match status" value="1"/>
</dbReference>
<dbReference type="PRINTS" id="PR01463">
    <property type="entry name" value="EAGCHANLFMLY"/>
</dbReference>
<dbReference type="SMART" id="SM00248">
    <property type="entry name" value="ANK"/>
    <property type="match status" value="4"/>
</dbReference>
<dbReference type="SMART" id="SM00100">
    <property type="entry name" value="cNMP"/>
    <property type="match status" value="1"/>
</dbReference>
<dbReference type="SUPFAM" id="SSF48403">
    <property type="entry name" value="Ankyrin repeat"/>
    <property type="match status" value="1"/>
</dbReference>
<dbReference type="SUPFAM" id="SSF51206">
    <property type="entry name" value="cAMP-binding domain-like"/>
    <property type="match status" value="1"/>
</dbReference>
<dbReference type="SUPFAM" id="SSF81324">
    <property type="entry name" value="Voltage-gated potassium channels"/>
    <property type="match status" value="1"/>
</dbReference>
<dbReference type="PROSITE" id="PS50297">
    <property type="entry name" value="ANK_REP_REGION"/>
    <property type="match status" value="1"/>
</dbReference>
<dbReference type="PROSITE" id="PS50088">
    <property type="entry name" value="ANK_REPEAT"/>
    <property type="match status" value="3"/>
</dbReference>
<dbReference type="PROSITE" id="PS50042">
    <property type="entry name" value="CNMP_BINDING_3"/>
    <property type="match status" value="1"/>
</dbReference>
<dbReference type="PROSITE" id="PS51490">
    <property type="entry name" value="KHA"/>
    <property type="match status" value="1"/>
</dbReference>
<sequence length="858" mass="97379">MGRGIGSKRRVEDDDGENMPGRKKKEEEEEEEDDDGEEEYEVDVVRDRIGSSRGSRLALFGSDLRLGRFRPRRRRVAPVDGDDGIFQDFVIDPDNKWYRLWTRFILVWAVYSSFFTPLEFGFFRGLPRNLFFLDIAGQIAFLIDIVLRFFVAYRDPDTYRMVHNPTSIALRYCKSSFIFDLLGCFPWDAIYKACGSKEEVRYLLWIRLTRAMKVTEFFRSMEKDIRINYLFTRIVKLIVVELYCTHTAACIFYYLATTLPESMEGYTWIGSLQLGDYSYSHFREIDLTKRYMTSLYFAIVTMATVGYGDIHAVNVREMIFIMIYVSFDMILGAYLIGNMTALIVKGSRTERFRDKMKEVIRYMNRNKLGKDIREQIKGHLRLQYESSYTEASVLQDIPVSIRAKISQTLYKPYIESIPLFKGCSAEFIQQIVIRLQEEFFLPGEVILEQGSAVDQLYFVCHGALEGVGIGEDGQEETILMLEPESSFGEIAVLCNIPQPFTVRVCELCRLLRLDKQSFTNILEIFFVDGRRILSNLSESSEYGSRIKQLESDITFHIGKQEAELTLRVNNAAFYGDMHQLKSLIRAGADPKNTDYDGRSPLHLAACKGFEDVVQFLLHEGVDIDLSDKFGNTPLLEAVKQGHDRVATLLFSKGAKLSLENAGSHLCTAVARGDTDFVRRALAYGGDPNARDYDHRAPLHIAAAEGLYLMAKLLVDAGASVFATDRWGTTPLDEGRRCGSRTMVQLLEAAKSGELSRYPERGEEVRDKMHPRRCSVFPHHPWDGGERRREGVVVWIPHTIEGLVSSAQEKLGLAGSGEGLRLLGEDGARVLDVDMVHDGQKLYLVVGGGGDDGGTEARQ</sequence>
<keyword id="KW-0040">ANK repeat</keyword>
<keyword id="KW-0407">Ion channel</keyword>
<keyword id="KW-0406">Ion transport</keyword>
<keyword id="KW-0472">Membrane</keyword>
<keyword id="KW-0630">Potassium</keyword>
<keyword id="KW-0631">Potassium channel</keyword>
<keyword id="KW-0633">Potassium transport</keyword>
<keyword id="KW-1185">Reference proteome</keyword>
<keyword id="KW-0677">Repeat</keyword>
<keyword id="KW-0812">Transmembrane</keyword>
<keyword id="KW-1133">Transmembrane helix</keyword>
<keyword id="KW-0813">Transport</keyword>
<keyword id="KW-0851">Voltage-gated channel</keyword>
<reference key="1">
    <citation type="journal article" date="2005" name="Nature">
        <title>The map-based sequence of the rice genome.</title>
        <authorList>
            <consortium name="International rice genome sequencing project (IRGSP)"/>
        </authorList>
    </citation>
    <scope>NUCLEOTIDE SEQUENCE [LARGE SCALE GENOMIC DNA]</scope>
    <source>
        <strain>cv. Nipponbare</strain>
        <tissue>Embryo</tissue>
    </source>
</reference>
<reference key="2">
    <citation type="journal article" date="2008" name="Nucleic Acids Res.">
        <title>The rice annotation project database (RAP-DB): 2008 update.</title>
        <authorList>
            <consortium name="The rice annotation project (RAP)"/>
        </authorList>
    </citation>
    <scope>GENOME REANNOTATION</scope>
    <source>
        <strain>cv. Nipponbare</strain>
    </source>
</reference>
<reference key="3">
    <citation type="journal article" date="2013" name="Rice">
        <title>Improvement of the Oryza sativa Nipponbare reference genome using next generation sequence and optical map data.</title>
        <authorList>
            <person name="Kawahara Y."/>
            <person name="de la Bastide M."/>
            <person name="Hamilton J.P."/>
            <person name="Kanamori H."/>
            <person name="McCombie W.R."/>
            <person name="Ouyang S."/>
            <person name="Schwartz D.C."/>
            <person name="Tanaka T."/>
            <person name="Wu J."/>
            <person name="Zhou S."/>
            <person name="Childs K.L."/>
            <person name="Davidson R.M."/>
            <person name="Lin H."/>
            <person name="Quesada-Ocampo L."/>
            <person name="Vaillancourt B."/>
            <person name="Sakai H."/>
            <person name="Lee S.S."/>
            <person name="Kim J."/>
            <person name="Numa H."/>
            <person name="Itoh T."/>
            <person name="Buell C.R."/>
            <person name="Matsumoto T."/>
        </authorList>
    </citation>
    <scope>GENOME REANNOTATION</scope>
    <source>
        <strain>cv. Nipponbare</strain>
    </source>
</reference>
<reference key="4">
    <citation type="submission" date="2006-10" db="EMBL/GenBank/DDBJ databases">
        <title>Oryza sativa full length cDNA.</title>
        <authorList>
            <consortium name="The rice full-length cDNA consortium"/>
        </authorList>
    </citation>
    <scope>NUCLEOTIDE SEQUENCE [LARGE SCALE MRNA]</scope>
    <source>
        <strain>cv. Nipponbare</strain>
    </source>
</reference>
<gene>
    <name type="ordered locus">Os06g0250600</name>
    <name type="ordered locus">LOC_Os06g14030</name>
    <name type="ORF">OSJNBa0091G06.35</name>
    <name type="ORF">P0431E05.11</name>
</gene>
<name>KOR1_ORYSJ</name>
<feature type="chain" id="PRO_0000410883" description="Potassium channel KOR1">
    <location>
        <begin position="1"/>
        <end position="858"/>
    </location>
</feature>
<feature type="topological domain" description="Cytoplasmic" evidence="2">
    <location>
        <begin position="1"/>
        <end position="102"/>
    </location>
</feature>
<feature type="transmembrane region" description="Helical; Name=Segment S1" evidence="2">
    <location>
        <begin position="103"/>
        <end position="123"/>
    </location>
</feature>
<feature type="topological domain" description="Extracellular" evidence="2">
    <location>
        <begin position="124"/>
        <end position="130"/>
    </location>
</feature>
<feature type="transmembrane region" description="Helical; Name=Segment S2" evidence="2">
    <location>
        <begin position="131"/>
        <end position="151"/>
    </location>
</feature>
<feature type="topological domain" description="Cytoplasmic" evidence="2">
    <location>
        <begin position="152"/>
        <end position="174"/>
    </location>
</feature>
<feature type="transmembrane region" description="Helical; Name=Segment S3" evidence="2">
    <location>
        <begin position="175"/>
        <end position="195"/>
    </location>
</feature>
<feature type="topological domain" description="Extracellular" evidence="2">
    <location>
        <begin position="196"/>
        <end position="201"/>
    </location>
</feature>
<feature type="transmembrane region" description="Helical; Voltage-sensor; Name=Segment S4" evidence="2">
    <location>
        <begin position="202"/>
        <end position="222"/>
    </location>
</feature>
<feature type="topological domain" description="Cytoplasmic" evidence="2">
    <location>
        <begin position="223"/>
        <end position="236"/>
    </location>
</feature>
<feature type="transmembrane region" description="Helical; Name=Segment S5" evidence="2">
    <location>
        <begin position="237"/>
        <end position="257"/>
    </location>
</feature>
<feature type="topological domain" description="Extracellular" evidence="2">
    <location>
        <begin position="258"/>
        <end position="292"/>
    </location>
</feature>
<feature type="intramembrane region" description="Pore-forming; Name=Segment H5" evidence="1">
    <location>
        <begin position="293"/>
        <end position="312"/>
    </location>
</feature>
<feature type="topological domain" description="Extracellular" evidence="2">
    <location>
        <begin position="313"/>
        <end position="316"/>
    </location>
</feature>
<feature type="transmembrane region" description="Helical; Name=Segment S6" evidence="2">
    <location>
        <begin position="317"/>
        <end position="337"/>
    </location>
</feature>
<feature type="topological domain" description="Cytoplasmic" evidence="2">
    <location>
        <begin position="338"/>
        <end position="858"/>
    </location>
</feature>
<feature type="repeat" description="ANK 1">
    <location>
        <begin position="559"/>
        <end position="592"/>
    </location>
</feature>
<feature type="repeat" description="ANK 2">
    <location>
        <begin position="596"/>
        <end position="625"/>
    </location>
</feature>
<feature type="repeat" description="ANK 3">
    <location>
        <begin position="629"/>
        <end position="658"/>
    </location>
</feature>
<feature type="repeat" description="ANK 4">
    <location>
        <begin position="660"/>
        <end position="689"/>
    </location>
</feature>
<feature type="repeat" description="ANK 5">
    <location>
        <begin position="693"/>
        <end position="722"/>
    </location>
</feature>
<feature type="repeat" description="ANK 6">
    <location>
        <begin position="726"/>
        <end position="756"/>
    </location>
</feature>
<feature type="domain" description="KHA" evidence="3">
    <location>
        <begin position="772"/>
        <end position="858"/>
    </location>
</feature>
<feature type="region of interest" description="Disordered" evidence="4">
    <location>
        <begin position="1"/>
        <end position="41"/>
    </location>
</feature>
<feature type="compositionally biased region" description="Acidic residues" evidence="4">
    <location>
        <begin position="27"/>
        <end position="41"/>
    </location>
</feature>
<feature type="binding site">
    <location>
        <begin position="419"/>
        <end position="539"/>
    </location>
    <ligand>
        <name>a nucleoside 3',5'-cyclic phosphate</name>
        <dbReference type="ChEBI" id="CHEBI:58464"/>
    </ligand>
</feature>
<organism>
    <name type="scientific">Oryza sativa subsp. japonica</name>
    <name type="common">Rice</name>
    <dbReference type="NCBI Taxonomy" id="39947"/>
    <lineage>
        <taxon>Eukaryota</taxon>
        <taxon>Viridiplantae</taxon>
        <taxon>Streptophyta</taxon>
        <taxon>Embryophyta</taxon>
        <taxon>Tracheophyta</taxon>
        <taxon>Spermatophyta</taxon>
        <taxon>Magnoliopsida</taxon>
        <taxon>Liliopsida</taxon>
        <taxon>Poales</taxon>
        <taxon>Poaceae</taxon>
        <taxon>BOP clade</taxon>
        <taxon>Oryzoideae</taxon>
        <taxon>Oryzeae</taxon>
        <taxon>Oryzinae</taxon>
        <taxon>Oryza</taxon>
        <taxon>Oryza sativa</taxon>
    </lineage>
</organism>
<protein>
    <recommendedName>
        <fullName>Potassium channel KOR1</fullName>
    </recommendedName>
    <alternativeName>
        <fullName>K(+) outward-rectifying channel 1</fullName>
    </alternativeName>
</protein>
<accession>Q653P0</accession>
<accession>A0A0N7KLV3</accession>
<accession>Q0DD66</accession>
<proteinExistence type="evidence at transcript level"/>
<comment type="function">
    <text evidence="1">Probable outward-rectifying potassium channel.</text>
</comment>
<comment type="subcellular location">
    <subcellularLocation>
        <location evidence="5">Membrane</location>
        <topology evidence="5">Multi-pass membrane protein</topology>
    </subcellularLocation>
</comment>
<comment type="domain">
    <text evidence="1">The segment S4 is probably the voltage-sensor and is characterized by a series of positively charged amino acids. The pore-forming region H5 is enclosed by the transmembrane segments S5 and S6 in the Shaker-type (1P/6TM) and contains the GYGD signature motif which seems to be involved in potassium selectivity (By similarity).</text>
</comment>
<comment type="domain">
    <text evidence="1">The KHA domain (rich in hydrophobic and acidic residues) present in the C-terminal part is likely to be important for tetramerization.</text>
</comment>
<comment type="similarity">
    <text evidence="5">Belongs to the potassium channel family. Plant (TC 1.A.1.4) subfamily.</text>
</comment>
<comment type="sequence caution" evidence="5">
    <conflict type="erroneous gene model prediction">
        <sequence resource="EMBL-CDS" id="BAF19207"/>
    </conflict>
</comment>